<comment type="function">
    <text evidence="1">This b-type cytochrome is tightly associated with the reaction center of photosystem II (PSII). PSII is a light-driven water:plastoquinone oxidoreductase that uses light energy to abstract electrons from H(2)O, generating O(2) and a proton gradient subsequently used for ATP formation. It consists of a core antenna complex that captures photons, and an electron transfer chain that converts photonic excitation into a charge separation.</text>
</comment>
<comment type="cofactor">
    <cofactor evidence="1">
        <name>heme b</name>
        <dbReference type="ChEBI" id="CHEBI:60344"/>
    </cofactor>
    <text evidence="1">With its partner (PsbF) binds heme. PSII binds additional chlorophylls, carotenoids and specific lipids.</text>
</comment>
<comment type="subunit">
    <text evidence="1">Heterodimer of an alpha subunit and a beta subunit. PSII is composed of 1 copy each of membrane proteins PsbA, PsbB, PsbC, PsbD, PsbE, PsbF, PsbH, PsbI, PsbJ, PsbK, PsbL, PsbM, PsbT, PsbX, PsbY, PsbZ, Psb30/Ycf12, at least 3 peripheral proteins of the oxygen-evolving complex and a large number of cofactors. It forms dimeric complexes.</text>
</comment>
<comment type="subcellular location">
    <subcellularLocation>
        <location evidence="1">Plastid</location>
        <location evidence="1">Chloroplast thylakoid membrane</location>
        <topology evidence="1">Single-pass membrane protein</topology>
    </subcellularLocation>
</comment>
<comment type="similarity">
    <text evidence="1">Belongs to the PsbE/PsbF family.</text>
</comment>
<reference key="1">
    <citation type="journal article" date="2006" name="BMC Genomics">
        <title>Complete plastid genome sequence of Daucus carota: implications for biotechnology and phylogeny of angiosperms.</title>
        <authorList>
            <person name="Ruhlman T."/>
            <person name="Lee S.-B."/>
            <person name="Jansen R.K."/>
            <person name="Hostetler J.B."/>
            <person name="Tallon L.J."/>
            <person name="Town C.D."/>
            <person name="Daniell H."/>
        </authorList>
    </citation>
    <scope>NUCLEOTIDE SEQUENCE [LARGE SCALE GENOMIC DNA]</scope>
    <source>
        <strain>cv. Danvers Half-long</strain>
    </source>
</reference>
<evidence type="ECO:0000255" key="1">
    <source>
        <dbReference type="HAMAP-Rule" id="MF_00642"/>
    </source>
</evidence>
<gene>
    <name evidence="1" type="primary">psbE</name>
</gene>
<sequence length="83" mass="9424">MSGSTGERSFADIITSIRYWVIHSITIPSLFIAGWLFVSTGLAYDVFGSPRPNEYFTENRQGIPLITGRFDPLEQLDEFSRSF</sequence>
<dbReference type="EMBL" id="DQ898156">
    <property type="protein sequence ID" value="ABI32441.1"/>
    <property type="molecule type" value="Genomic_DNA"/>
</dbReference>
<dbReference type="RefSeq" id="YP_740134.1">
    <property type="nucleotide sequence ID" value="NC_008325.1"/>
</dbReference>
<dbReference type="SMR" id="Q0G9U5"/>
<dbReference type="GeneID" id="4266760"/>
<dbReference type="GO" id="GO:0009535">
    <property type="term" value="C:chloroplast thylakoid membrane"/>
    <property type="evidence" value="ECO:0007669"/>
    <property type="project" value="UniProtKB-SubCell"/>
</dbReference>
<dbReference type="GO" id="GO:0009539">
    <property type="term" value="C:photosystem II reaction center"/>
    <property type="evidence" value="ECO:0007669"/>
    <property type="project" value="InterPro"/>
</dbReference>
<dbReference type="GO" id="GO:0009055">
    <property type="term" value="F:electron transfer activity"/>
    <property type="evidence" value="ECO:0007669"/>
    <property type="project" value="UniProtKB-UniRule"/>
</dbReference>
<dbReference type="GO" id="GO:0020037">
    <property type="term" value="F:heme binding"/>
    <property type="evidence" value="ECO:0007669"/>
    <property type="project" value="InterPro"/>
</dbReference>
<dbReference type="GO" id="GO:0005506">
    <property type="term" value="F:iron ion binding"/>
    <property type="evidence" value="ECO:0007669"/>
    <property type="project" value="UniProtKB-UniRule"/>
</dbReference>
<dbReference type="GO" id="GO:0009767">
    <property type="term" value="P:photosynthetic electron transport chain"/>
    <property type="evidence" value="ECO:0007669"/>
    <property type="project" value="InterPro"/>
</dbReference>
<dbReference type="Gene3D" id="1.20.5.860">
    <property type="entry name" value="Photosystem II cytochrome b559, alpha subunit"/>
    <property type="match status" value="1"/>
</dbReference>
<dbReference type="HAMAP" id="MF_00642">
    <property type="entry name" value="PSII_PsbE"/>
    <property type="match status" value="1"/>
</dbReference>
<dbReference type="InterPro" id="IPR006217">
    <property type="entry name" value="PSII_cyt_b559_asu"/>
</dbReference>
<dbReference type="InterPro" id="IPR037025">
    <property type="entry name" value="PSII_cyt_b559_asu_sf"/>
</dbReference>
<dbReference type="InterPro" id="IPR006216">
    <property type="entry name" value="PSII_cyt_b559_CS"/>
</dbReference>
<dbReference type="InterPro" id="IPR013081">
    <property type="entry name" value="PSII_cyt_b559_N"/>
</dbReference>
<dbReference type="InterPro" id="IPR013082">
    <property type="entry name" value="PSII_cytb559_asu_lum"/>
</dbReference>
<dbReference type="NCBIfam" id="TIGR01332">
    <property type="entry name" value="cyt_b559_alpha"/>
    <property type="match status" value="1"/>
</dbReference>
<dbReference type="PANTHER" id="PTHR33391">
    <property type="entry name" value="CYTOCHROME B559 SUBUNIT BETA-RELATED"/>
    <property type="match status" value="1"/>
</dbReference>
<dbReference type="PANTHER" id="PTHR33391:SF9">
    <property type="entry name" value="CYTOCHROME B559 SUBUNIT BETA-RELATED"/>
    <property type="match status" value="1"/>
</dbReference>
<dbReference type="Pfam" id="PF00283">
    <property type="entry name" value="Cytochrom_B559"/>
    <property type="match status" value="1"/>
</dbReference>
<dbReference type="Pfam" id="PF00284">
    <property type="entry name" value="Cytochrom_B559a"/>
    <property type="match status" value="1"/>
</dbReference>
<dbReference type="PIRSF" id="PIRSF000036">
    <property type="entry name" value="PsbE"/>
    <property type="match status" value="1"/>
</dbReference>
<dbReference type="SUPFAM" id="SSF161045">
    <property type="entry name" value="Cytochrome b559 subunits"/>
    <property type="match status" value="1"/>
</dbReference>
<dbReference type="PROSITE" id="PS00537">
    <property type="entry name" value="CYTOCHROME_B559"/>
    <property type="match status" value="1"/>
</dbReference>
<keyword id="KW-0150">Chloroplast</keyword>
<keyword id="KW-0249">Electron transport</keyword>
<keyword id="KW-0349">Heme</keyword>
<keyword id="KW-0408">Iron</keyword>
<keyword id="KW-0472">Membrane</keyword>
<keyword id="KW-0479">Metal-binding</keyword>
<keyword id="KW-0602">Photosynthesis</keyword>
<keyword id="KW-0604">Photosystem II</keyword>
<keyword id="KW-0934">Plastid</keyword>
<keyword id="KW-0793">Thylakoid</keyword>
<keyword id="KW-0812">Transmembrane</keyword>
<keyword id="KW-1133">Transmembrane helix</keyword>
<keyword id="KW-0813">Transport</keyword>
<protein>
    <recommendedName>
        <fullName evidence="1">Cytochrome b559 subunit alpha</fullName>
    </recommendedName>
    <alternativeName>
        <fullName evidence="1">PSII reaction center subunit V</fullName>
    </alternativeName>
</protein>
<name>PSBE_DAUCA</name>
<proteinExistence type="inferred from homology"/>
<organism>
    <name type="scientific">Daucus carota</name>
    <name type="common">Wild carrot</name>
    <dbReference type="NCBI Taxonomy" id="4039"/>
    <lineage>
        <taxon>Eukaryota</taxon>
        <taxon>Viridiplantae</taxon>
        <taxon>Streptophyta</taxon>
        <taxon>Embryophyta</taxon>
        <taxon>Tracheophyta</taxon>
        <taxon>Spermatophyta</taxon>
        <taxon>Magnoliopsida</taxon>
        <taxon>eudicotyledons</taxon>
        <taxon>Gunneridae</taxon>
        <taxon>Pentapetalae</taxon>
        <taxon>asterids</taxon>
        <taxon>campanulids</taxon>
        <taxon>Apiales</taxon>
        <taxon>Apiaceae</taxon>
        <taxon>Apioideae</taxon>
        <taxon>Scandiceae</taxon>
        <taxon>Daucinae</taxon>
        <taxon>Daucus</taxon>
        <taxon>Daucus sect. Daucus</taxon>
    </lineage>
</organism>
<accession>Q0G9U5</accession>
<geneLocation type="chloroplast"/>
<feature type="chain" id="PRO_0000275705" description="Cytochrome b559 subunit alpha">
    <location>
        <begin position="1"/>
        <end position="83"/>
    </location>
</feature>
<feature type="transmembrane region" description="Helical" evidence="1">
    <location>
        <begin position="21"/>
        <end position="35"/>
    </location>
</feature>
<feature type="binding site" description="axial binding residue" evidence="1">
    <location>
        <position position="23"/>
    </location>
    <ligand>
        <name>heme</name>
        <dbReference type="ChEBI" id="CHEBI:30413"/>
        <note>ligand shared with beta subunit</note>
    </ligand>
    <ligandPart>
        <name>Fe</name>
        <dbReference type="ChEBI" id="CHEBI:18248"/>
    </ligandPart>
</feature>